<feature type="chain" id="PRO_0000148092" description="ATP-dependent protease subunit HslV">
    <location>
        <begin position="1"/>
        <end position="184"/>
    </location>
</feature>
<feature type="active site" evidence="1">
    <location>
        <position position="12"/>
    </location>
</feature>
<feature type="binding site" evidence="1">
    <location>
        <position position="166"/>
    </location>
    <ligand>
        <name>Na(+)</name>
        <dbReference type="ChEBI" id="CHEBI:29101"/>
    </ligand>
</feature>
<feature type="binding site" evidence="1">
    <location>
        <position position="169"/>
    </location>
    <ligand>
        <name>Na(+)</name>
        <dbReference type="ChEBI" id="CHEBI:29101"/>
    </ligand>
</feature>
<feature type="binding site" evidence="1">
    <location>
        <position position="172"/>
    </location>
    <ligand>
        <name>Na(+)</name>
        <dbReference type="ChEBI" id="CHEBI:29101"/>
    </ligand>
</feature>
<proteinExistence type="inferred from homology"/>
<dbReference type="EC" id="3.4.25.2" evidence="1"/>
<dbReference type="EMBL" id="AE008917">
    <property type="protein sequence ID" value="AAL53228.1"/>
    <property type="molecule type" value="Genomic_DNA"/>
</dbReference>
<dbReference type="PIR" id="AI3507">
    <property type="entry name" value="AI3507"/>
</dbReference>
<dbReference type="RefSeq" id="WP_004686729.1">
    <property type="nucleotide sequence ID" value="NC_003317.1"/>
</dbReference>
<dbReference type="SMR" id="Q8YE31"/>
<dbReference type="GeneID" id="29594924"/>
<dbReference type="KEGG" id="bme:BMEI2047"/>
<dbReference type="KEGG" id="bmel:DK63_1447"/>
<dbReference type="PATRIC" id="fig|224914.52.peg.1524"/>
<dbReference type="eggNOG" id="COG5405">
    <property type="taxonomic scope" value="Bacteria"/>
</dbReference>
<dbReference type="PhylomeDB" id="Q8YE31"/>
<dbReference type="Proteomes" id="UP000000419">
    <property type="component" value="Chromosome I"/>
</dbReference>
<dbReference type="GO" id="GO:0009376">
    <property type="term" value="C:HslUV protease complex"/>
    <property type="evidence" value="ECO:0007669"/>
    <property type="project" value="UniProtKB-UniRule"/>
</dbReference>
<dbReference type="GO" id="GO:0005839">
    <property type="term" value="C:proteasome core complex"/>
    <property type="evidence" value="ECO:0007669"/>
    <property type="project" value="InterPro"/>
</dbReference>
<dbReference type="GO" id="GO:0046872">
    <property type="term" value="F:metal ion binding"/>
    <property type="evidence" value="ECO:0007669"/>
    <property type="project" value="UniProtKB-KW"/>
</dbReference>
<dbReference type="GO" id="GO:0004298">
    <property type="term" value="F:threonine-type endopeptidase activity"/>
    <property type="evidence" value="ECO:0007669"/>
    <property type="project" value="UniProtKB-KW"/>
</dbReference>
<dbReference type="GO" id="GO:0051603">
    <property type="term" value="P:proteolysis involved in protein catabolic process"/>
    <property type="evidence" value="ECO:0007669"/>
    <property type="project" value="InterPro"/>
</dbReference>
<dbReference type="CDD" id="cd01913">
    <property type="entry name" value="protease_HslV"/>
    <property type="match status" value="1"/>
</dbReference>
<dbReference type="FunFam" id="3.60.20.10:FF:000002">
    <property type="entry name" value="ATP-dependent protease subunit HslV"/>
    <property type="match status" value="1"/>
</dbReference>
<dbReference type="Gene3D" id="3.60.20.10">
    <property type="entry name" value="Glutamine Phosphoribosylpyrophosphate, subunit 1, domain 1"/>
    <property type="match status" value="1"/>
</dbReference>
<dbReference type="HAMAP" id="MF_00248">
    <property type="entry name" value="HslV"/>
    <property type="match status" value="1"/>
</dbReference>
<dbReference type="InterPro" id="IPR022281">
    <property type="entry name" value="ATP-dep_Prtase_HsIV_su"/>
</dbReference>
<dbReference type="InterPro" id="IPR029055">
    <property type="entry name" value="Ntn_hydrolases_N"/>
</dbReference>
<dbReference type="InterPro" id="IPR001353">
    <property type="entry name" value="Proteasome_sua/b"/>
</dbReference>
<dbReference type="InterPro" id="IPR023333">
    <property type="entry name" value="Proteasome_suB-type"/>
</dbReference>
<dbReference type="NCBIfam" id="TIGR03692">
    <property type="entry name" value="ATP_dep_HslV"/>
    <property type="match status" value="1"/>
</dbReference>
<dbReference type="NCBIfam" id="NF003964">
    <property type="entry name" value="PRK05456.1"/>
    <property type="match status" value="1"/>
</dbReference>
<dbReference type="PANTHER" id="PTHR32194:SF7">
    <property type="entry name" value="ATP-DEPENDENT PROTEASE SUBUNIT HSLV"/>
    <property type="match status" value="1"/>
</dbReference>
<dbReference type="PANTHER" id="PTHR32194">
    <property type="entry name" value="METALLOPROTEASE TLDD"/>
    <property type="match status" value="1"/>
</dbReference>
<dbReference type="Pfam" id="PF00227">
    <property type="entry name" value="Proteasome"/>
    <property type="match status" value="1"/>
</dbReference>
<dbReference type="PIRSF" id="PIRSF039093">
    <property type="entry name" value="HslV"/>
    <property type="match status" value="1"/>
</dbReference>
<dbReference type="SUPFAM" id="SSF56235">
    <property type="entry name" value="N-terminal nucleophile aminohydrolases (Ntn hydrolases)"/>
    <property type="match status" value="1"/>
</dbReference>
<dbReference type="PROSITE" id="PS51476">
    <property type="entry name" value="PROTEASOME_BETA_2"/>
    <property type="match status" value="1"/>
</dbReference>
<evidence type="ECO:0000255" key="1">
    <source>
        <dbReference type="HAMAP-Rule" id="MF_00248"/>
    </source>
</evidence>
<gene>
    <name evidence="1" type="primary">hslV</name>
    <name type="ordered locus">BMEI2047</name>
</gene>
<accession>Q8YE31</accession>
<keyword id="KW-0021">Allosteric enzyme</keyword>
<keyword id="KW-0963">Cytoplasm</keyword>
<keyword id="KW-0378">Hydrolase</keyword>
<keyword id="KW-0479">Metal-binding</keyword>
<keyword id="KW-0645">Protease</keyword>
<keyword id="KW-0915">Sodium</keyword>
<keyword id="KW-0888">Threonine protease</keyword>
<protein>
    <recommendedName>
        <fullName evidence="1">ATP-dependent protease subunit HslV</fullName>
        <ecNumber evidence="1">3.4.25.2</ecNumber>
    </recommendedName>
</protein>
<comment type="function">
    <text evidence="1">Protease subunit of a proteasome-like degradation complex believed to be a general protein degrading machinery.</text>
</comment>
<comment type="catalytic activity">
    <reaction evidence="1">
        <text>ATP-dependent cleavage of peptide bonds with broad specificity.</text>
        <dbReference type="EC" id="3.4.25.2"/>
    </reaction>
</comment>
<comment type="activity regulation">
    <text evidence="1">Allosterically activated by HslU binding.</text>
</comment>
<comment type="subunit">
    <text evidence="1">A double ring-shaped homohexamer of HslV is capped on each side by a ring-shaped HslU homohexamer. The assembly of the HslU/HslV complex is dependent on binding of ATP.</text>
</comment>
<comment type="subcellular location">
    <subcellularLocation>
        <location evidence="1">Cytoplasm</location>
    </subcellularLocation>
</comment>
<comment type="similarity">
    <text evidence="1">Belongs to the peptidase T1B family. HslV subfamily.</text>
</comment>
<reference key="1">
    <citation type="journal article" date="2002" name="Proc. Natl. Acad. Sci. U.S.A.">
        <title>The genome sequence of the facultative intracellular pathogen Brucella melitensis.</title>
        <authorList>
            <person name="DelVecchio V.G."/>
            <person name="Kapatral V."/>
            <person name="Redkar R.J."/>
            <person name="Patra G."/>
            <person name="Mujer C."/>
            <person name="Los T."/>
            <person name="Ivanova N."/>
            <person name="Anderson I."/>
            <person name="Bhattacharyya A."/>
            <person name="Lykidis A."/>
            <person name="Reznik G."/>
            <person name="Jablonski L."/>
            <person name="Larsen N."/>
            <person name="D'Souza M."/>
            <person name="Bernal A."/>
            <person name="Mazur M."/>
            <person name="Goltsman E."/>
            <person name="Selkov E."/>
            <person name="Elzer P.H."/>
            <person name="Hagius S."/>
            <person name="O'Callaghan D."/>
            <person name="Letesson J.-J."/>
            <person name="Haselkorn R."/>
            <person name="Kyrpides N.C."/>
            <person name="Overbeek R."/>
        </authorList>
    </citation>
    <scope>NUCLEOTIDE SEQUENCE [LARGE SCALE GENOMIC DNA]</scope>
    <source>
        <strain>ATCC 23456 / CCUG 17765 / NCTC 10094 / 16M</strain>
    </source>
</reference>
<organism>
    <name type="scientific">Brucella melitensis biotype 1 (strain ATCC 23456 / CCUG 17765 / NCTC 10094 / 16M)</name>
    <dbReference type="NCBI Taxonomy" id="224914"/>
    <lineage>
        <taxon>Bacteria</taxon>
        <taxon>Pseudomonadati</taxon>
        <taxon>Pseudomonadota</taxon>
        <taxon>Alphaproteobacteria</taxon>
        <taxon>Hyphomicrobiales</taxon>
        <taxon>Brucellaceae</taxon>
        <taxon>Brucella/Ochrobactrum group</taxon>
        <taxon>Brucella</taxon>
    </lineage>
</organism>
<sequence length="184" mass="19839">MIEHNPTTIYGTTIVTVRKDGKVVIAGDGQVSLGNTVMKGNARKVRRIGKGNVIAGFAGATADAFTLLERLEAKLEQYPDQLMRASVELTKDWRTDRYLRKLEAMMLVADSKVTLALTGTGDVLEPEQGVMAIGSGGNYALAAARALIETDKSAEEIARKAMNIAADICIYTNHNIIVESLDAQ</sequence>
<name>HSLV_BRUME</name>